<evidence type="ECO:0000255" key="1">
    <source>
        <dbReference type="HAMAP-Rule" id="MF_00627"/>
    </source>
</evidence>
<dbReference type="EC" id="1.1.1.103" evidence="1"/>
<dbReference type="EMBL" id="CP001026">
    <property type="protein sequence ID" value="ACB65590.1"/>
    <property type="molecule type" value="Genomic_DNA"/>
</dbReference>
<dbReference type="RefSeq" id="WP_006751655.1">
    <property type="nucleotide sequence ID" value="NC_010552.1"/>
</dbReference>
<dbReference type="SMR" id="B1YXP0"/>
<dbReference type="KEGG" id="bac:BamMC406_3116"/>
<dbReference type="HOGENOM" id="CLU_026673_11_0_4"/>
<dbReference type="OrthoDB" id="5484143at2"/>
<dbReference type="UniPathway" id="UPA00046">
    <property type="reaction ID" value="UER00505"/>
</dbReference>
<dbReference type="Proteomes" id="UP000001680">
    <property type="component" value="Chromosome 2"/>
</dbReference>
<dbReference type="GO" id="GO:0005737">
    <property type="term" value="C:cytoplasm"/>
    <property type="evidence" value="ECO:0007669"/>
    <property type="project" value="UniProtKB-SubCell"/>
</dbReference>
<dbReference type="GO" id="GO:0008743">
    <property type="term" value="F:L-threonine 3-dehydrogenase activity"/>
    <property type="evidence" value="ECO:0007669"/>
    <property type="project" value="UniProtKB-UniRule"/>
</dbReference>
<dbReference type="GO" id="GO:0008270">
    <property type="term" value="F:zinc ion binding"/>
    <property type="evidence" value="ECO:0007669"/>
    <property type="project" value="UniProtKB-UniRule"/>
</dbReference>
<dbReference type="GO" id="GO:0019518">
    <property type="term" value="P:L-threonine catabolic process to glycine"/>
    <property type="evidence" value="ECO:0007669"/>
    <property type="project" value="UniProtKB-UniPathway"/>
</dbReference>
<dbReference type="Gene3D" id="3.90.180.10">
    <property type="entry name" value="Medium-chain alcohol dehydrogenases, catalytic domain"/>
    <property type="match status" value="1"/>
</dbReference>
<dbReference type="Gene3D" id="3.40.50.720">
    <property type="entry name" value="NAD(P)-binding Rossmann-like Domain"/>
    <property type="match status" value="1"/>
</dbReference>
<dbReference type="HAMAP" id="MF_00627">
    <property type="entry name" value="Thr_dehydrog"/>
    <property type="match status" value="1"/>
</dbReference>
<dbReference type="InterPro" id="IPR013149">
    <property type="entry name" value="ADH-like_C"/>
</dbReference>
<dbReference type="InterPro" id="IPR013154">
    <property type="entry name" value="ADH-like_N"/>
</dbReference>
<dbReference type="InterPro" id="IPR002328">
    <property type="entry name" value="ADH_Zn_CS"/>
</dbReference>
<dbReference type="InterPro" id="IPR011032">
    <property type="entry name" value="GroES-like_sf"/>
</dbReference>
<dbReference type="InterPro" id="IPR004627">
    <property type="entry name" value="L-Threonine_3-DHase"/>
</dbReference>
<dbReference type="InterPro" id="IPR036291">
    <property type="entry name" value="NAD(P)-bd_dom_sf"/>
</dbReference>
<dbReference type="InterPro" id="IPR020843">
    <property type="entry name" value="PKS_ER"/>
</dbReference>
<dbReference type="InterPro" id="IPR050129">
    <property type="entry name" value="Zn_alcohol_dh"/>
</dbReference>
<dbReference type="NCBIfam" id="NF003808">
    <property type="entry name" value="PRK05396.1"/>
    <property type="match status" value="1"/>
</dbReference>
<dbReference type="NCBIfam" id="TIGR00692">
    <property type="entry name" value="tdh"/>
    <property type="match status" value="1"/>
</dbReference>
<dbReference type="PANTHER" id="PTHR43401">
    <property type="entry name" value="L-THREONINE 3-DEHYDROGENASE"/>
    <property type="match status" value="1"/>
</dbReference>
<dbReference type="PANTHER" id="PTHR43401:SF2">
    <property type="entry name" value="L-THREONINE 3-DEHYDROGENASE"/>
    <property type="match status" value="1"/>
</dbReference>
<dbReference type="Pfam" id="PF08240">
    <property type="entry name" value="ADH_N"/>
    <property type="match status" value="1"/>
</dbReference>
<dbReference type="Pfam" id="PF00107">
    <property type="entry name" value="ADH_zinc_N"/>
    <property type="match status" value="1"/>
</dbReference>
<dbReference type="SMART" id="SM00829">
    <property type="entry name" value="PKS_ER"/>
    <property type="match status" value="1"/>
</dbReference>
<dbReference type="SUPFAM" id="SSF50129">
    <property type="entry name" value="GroES-like"/>
    <property type="match status" value="1"/>
</dbReference>
<dbReference type="SUPFAM" id="SSF51735">
    <property type="entry name" value="NAD(P)-binding Rossmann-fold domains"/>
    <property type="match status" value="1"/>
</dbReference>
<dbReference type="PROSITE" id="PS00059">
    <property type="entry name" value="ADH_ZINC"/>
    <property type="match status" value="1"/>
</dbReference>
<feature type="chain" id="PRO_1000130537" description="L-threonine 3-dehydrogenase">
    <location>
        <begin position="1"/>
        <end position="342"/>
    </location>
</feature>
<feature type="active site" description="Charge relay system" evidence="1">
    <location>
        <position position="40"/>
    </location>
</feature>
<feature type="active site" description="Charge relay system" evidence="1">
    <location>
        <position position="43"/>
    </location>
</feature>
<feature type="binding site" evidence="1">
    <location>
        <position position="38"/>
    </location>
    <ligand>
        <name>Zn(2+)</name>
        <dbReference type="ChEBI" id="CHEBI:29105"/>
        <label>1</label>
        <note>catalytic</note>
    </ligand>
</feature>
<feature type="binding site" evidence="1">
    <location>
        <position position="63"/>
    </location>
    <ligand>
        <name>Zn(2+)</name>
        <dbReference type="ChEBI" id="CHEBI:29105"/>
        <label>1</label>
        <note>catalytic</note>
    </ligand>
</feature>
<feature type="binding site" evidence="1">
    <location>
        <position position="64"/>
    </location>
    <ligand>
        <name>Zn(2+)</name>
        <dbReference type="ChEBI" id="CHEBI:29105"/>
        <label>1</label>
        <note>catalytic</note>
    </ligand>
</feature>
<feature type="binding site" evidence="1">
    <location>
        <position position="93"/>
    </location>
    <ligand>
        <name>Zn(2+)</name>
        <dbReference type="ChEBI" id="CHEBI:29105"/>
        <label>2</label>
    </ligand>
</feature>
<feature type="binding site" evidence="1">
    <location>
        <position position="96"/>
    </location>
    <ligand>
        <name>Zn(2+)</name>
        <dbReference type="ChEBI" id="CHEBI:29105"/>
        <label>2</label>
    </ligand>
</feature>
<feature type="binding site" evidence="1">
    <location>
        <position position="99"/>
    </location>
    <ligand>
        <name>Zn(2+)</name>
        <dbReference type="ChEBI" id="CHEBI:29105"/>
        <label>2</label>
    </ligand>
</feature>
<feature type="binding site" evidence="1">
    <location>
        <position position="107"/>
    </location>
    <ligand>
        <name>Zn(2+)</name>
        <dbReference type="ChEBI" id="CHEBI:29105"/>
        <label>2</label>
    </ligand>
</feature>
<feature type="binding site" evidence="1">
    <location>
        <position position="175"/>
    </location>
    <ligand>
        <name>NAD(+)</name>
        <dbReference type="ChEBI" id="CHEBI:57540"/>
    </ligand>
</feature>
<feature type="binding site" evidence="1">
    <location>
        <position position="195"/>
    </location>
    <ligand>
        <name>NAD(+)</name>
        <dbReference type="ChEBI" id="CHEBI:57540"/>
    </ligand>
</feature>
<feature type="binding site" evidence="1">
    <location>
        <position position="200"/>
    </location>
    <ligand>
        <name>NAD(+)</name>
        <dbReference type="ChEBI" id="CHEBI:57540"/>
    </ligand>
</feature>
<feature type="binding site" evidence="1">
    <location>
        <begin position="262"/>
        <end position="264"/>
    </location>
    <ligand>
        <name>NAD(+)</name>
        <dbReference type="ChEBI" id="CHEBI:57540"/>
    </ligand>
</feature>
<feature type="binding site" evidence="1">
    <location>
        <begin position="286"/>
        <end position="287"/>
    </location>
    <ligand>
        <name>NAD(+)</name>
        <dbReference type="ChEBI" id="CHEBI:57540"/>
    </ligand>
</feature>
<feature type="site" description="Important for catalytic activity for the proton relay mechanism but does not participate directly in the coordination of zinc atom" evidence="1">
    <location>
        <position position="148"/>
    </location>
</feature>
<protein>
    <recommendedName>
        <fullName evidence="1">L-threonine 3-dehydrogenase</fullName>
        <shortName evidence="1">TDH</shortName>
        <ecNumber evidence="1">1.1.1.103</ecNumber>
    </recommendedName>
</protein>
<keyword id="KW-0963">Cytoplasm</keyword>
<keyword id="KW-0479">Metal-binding</keyword>
<keyword id="KW-0520">NAD</keyword>
<keyword id="KW-0560">Oxidoreductase</keyword>
<keyword id="KW-0862">Zinc</keyword>
<name>TDH_BURA4</name>
<gene>
    <name evidence="1" type="primary">tdh</name>
    <name type="ordered locus">BamMC406_3116</name>
</gene>
<reference key="1">
    <citation type="submission" date="2008-04" db="EMBL/GenBank/DDBJ databases">
        <title>Complete sequence of chromosome 2 of Burkholderia ambifaria MC40-6.</title>
        <authorList>
            <person name="Copeland A."/>
            <person name="Lucas S."/>
            <person name="Lapidus A."/>
            <person name="Glavina del Rio T."/>
            <person name="Dalin E."/>
            <person name="Tice H."/>
            <person name="Pitluck S."/>
            <person name="Chain P."/>
            <person name="Malfatti S."/>
            <person name="Shin M."/>
            <person name="Vergez L."/>
            <person name="Lang D."/>
            <person name="Schmutz J."/>
            <person name="Larimer F."/>
            <person name="Land M."/>
            <person name="Hauser L."/>
            <person name="Kyrpides N."/>
            <person name="Lykidis A."/>
            <person name="Ramette A."/>
            <person name="Konstantinidis K."/>
            <person name="Tiedje J."/>
            <person name="Richardson P."/>
        </authorList>
    </citation>
    <scope>NUCLEOTIDE SEQUENCE [LARGE SCALE GENOMIC DNA]</scope>
    <source>
        <strain>MC40-6</strain>
    </source>
</reference>
<sequence>MKALAKLERGPGLTLTRVKRPEVGHNDVLIKIHRTAICGTDIHIWKWDDWAQKTIPVPMHVGHEYVGEIVEMGQEVRGFAIGDRVSGEGHITCGFCRNCRAGRRHLCRNTVGVGVNREGAFAEYLAIPAFNAFKIPPEISDDLASIFDPFGNATHTALSFNLVGEDVLITGAGPIGVMAAAIAKHVGARNVVITDINDYRLELARKMGATRAVNVSRESLRDVMADLHMTEGFDVGLEMSGVPSAFTSMLEAMNHGGKVALLGIPPAQTAIDWNQVIFKGLEIKGIYGREMFETWYKMVAMLQSGLDLSPIITHRFAADDYEKGFAAMLSGESGKVILDWTV</sequence>
<accession>B1YXP0</accession>
<comment type="function">
    <text evidence="1">Catalyzes the NAD(+)-dependent oxidation of L-threonine to 2-amino-3-ketobutyrate.</text>
</comment>
<comment type="catalytic activity">
    <reaction evidence="1">
        <text>L-threonine + NAD(+) = (2S)-2-amino-3-oxobutanoate + NADH + H(+)</text>
        <dbReference type="Rhea" id="RHEA:13161"/>
        <dbReference type="ChEBI" id="CHEBI:15378"/>
        <dbReference type="ChEBI" id="CHEBI:57540"/>
        <dbReference type="ChEBI" id="CHEBI:57926"/>
        <dbReference type="ChEBI" id="CHEBI:57945"/>
        <dbReference type="ChEBI" id="CHEBI:78948"/>
        <dbReference type="EC" id="1.1.1.103"/>
    </reaction>
</comment>
<comment type="cofactor">
    <cofactor evidence="1">
        <name>Zn(2+)</name>
        <dbReference type="ChEBI" id="CHEBI:29105"/>
    </cofactor>
    <text evidence="1">Binds 2 Zn(2+) ions per subunit.</text>
</comment>
<comment type="pathway">
    <text evidence="1">Amino-acid degradation; L-threonine degradation via oxydo-reductase pathway; glycine from L-threonine: step 1/2.</text>
</comment>
<comment type="subunit">
    <text evidence="1">Homotetramer.</text>
</comment>
<comment type="subcellular location">
    <subcellularLocation>
        <location evidence="1">Cytoplasm</location>
    </subcellularLocation>
</comment>
<comment type="similarity">
    <text evidence="1">Belongs to the zinc-containing alcohol dehydrogenase family.</text>
</comment>
<organism>
    <name type="scientific">Burkholderia ambifaria (strain MC40-6)</name>
    <dbReference type="NCBI Taxonomy" id="398577"/>
    <lineage>
        <taxon>Bacteria</taxon>
        <taxon>Pseudomonadati</taxon>
        <taxon>Pseudomonadota</taxon>
        <taxon>Betaproteobacteria</taxon>
        <taxon>Burkholderiales</taxon>
        <taxon>Burkholderiaceae</taxon>
        <taxon>Burkholderia</taxon>
        <taxon>Burkholderia cepacia complex</taxon>
    </lineage>
</organism>
<proteinExistence type="inferred from homology"/>